<gene>
    <name type="primary">SBP65</name>
</gene>
<comment type="function">
    <text evidence="1">May serve as a biotin source for several growth-limiting enzymes that are necessary during seed development and the subsequent germination stages, and thus may play some roles in determining seed germination capacity.</text>
</comment>
<comment type="tissue specificity">
    <text evidence="4">Expressed in dry mature seeds.</text>
</comment>
<comment type="induction">
    <text evidence="4">Induced by abscisic acid.</text>
</comment>
<comment type="similarity">
    <text evidence="5">Belongs to the seed biotin-containing protein SBP65 family.</text>
</comment>
<proteinExistence type="evidence at protein level"/>
<keyword id="KW-0092">Biotin</keyword>
<keyword id="KW-0175">Coiled coil</keyword>
<keyword id="KW-0903">Direct protein sequencing</keyword>
<keyword id="KW-0309">Germination</keyword>
<reference key="1">
    <citation type="journal article" date="1994" name="Plant Mol. Biol.">
        <title>The major biotinyl protein from Pisum sativum seeds covalently binds biotin at a novel site.</title>
        <authorList>
            <person name="Duval M."/>
            <person name="DeRose R.T."/>
            <person name="Job C."/>
            <person name="Faucher D."/>
            <person name="Douce R."/>
            <person name="Job D."/>
        </authorList>
    </citation>
    <scope>NUCLEOTIDE SEQUENCE [MRNA]</scope>
    <scope>PROTEIN SEQUENCE OF 17-27; 29-35; 37-49; 62-74; 93-125 AND 129-146</scope>
    <scope>INDUCTION</scope>
    <scope>TISSUE SPECIFICITY</scope>
    <scope>BIOTINYLATION AT LYS-103</scope>
    <source>
        <strain>cv. Douce Provence</strain>
    </source>
</reference>
<reference key="2">
    <citation type="journal article" date="1997" name="Plant Mol. Biol.">
        <title>Cloning and expression of the pea gene encoding SBP65, a seed-specific biotinylated protein.</title>
        <authorList>
            <person name="Dehaye L."/>
            <person name="Duval M."/>
            <person name="Viguier D."/>
            <person name="Yaxley J."/>
            <person name="Job D."/>
        </authorList>
    </citation>
    <scope>NUCLEOTIDE SEQUENCE [GENOMIC DNA]</scope>
    <source>
        <strain>cv. Alaska</strain>
    </source>
</reference>
<organism>
    <name type="scientific">Pisum sativum</name>
    <name type="common">Garden pea</name>
    <name type="synonym">Lathyrus oleraceus</name>
    <dbReference type="NCBI Taxonomy" id="3888"/>
    <lineage>
        <taxon>Eukaryota</taxon>
        <taxon>Viridiplantae</taxon>
        <taxon>Streptophyta</taxon>
        <taxon>Embryophyta</taxon>
        <taxon>Tracheophyta</taxon>
        <taxon>Spermatophyta</taxon>
        <taxon>Magnoliopsida</taxon>
        <taxon>eudicotyledons</taxon>
        <taxon>Gunneridae</taxon>
        <taxon>Pentapetalae</taxon>
        <taxon>rosids</taxon>
        <taxon>fabids</taxon>
        <taxon>Fabales</taxon>
        <taxon>Fabaceae</taxon>
        <taxon>Papilionoideae</taxon>
        <taxon>50 kb inversion clade</taxon>
        <taxon>NPAAA clade</taxon>
        <taxon>Hologalegina</taxon>
        <taxon>IRL clade</taxon>
        <taxon>Fabeae</taxon>
        <taxon>Pisum</taxon>
    </lineage>
</organism>
<sequence length="551" mass="59554">MASEQLSRRENITTERKIQNAEDSVPQRTTHFELRETHELGPNFQSLPRNENQAYLDRGARAPLSANVSESYLDRARVPLNANIPEHRVREKEDFGGVRDMGKFQMESKGGNKSLAEDRETLDTRSRMVTGTPHIKEASGKGQVVEERERARERAMEEEEKRLTMEEISKYRNQAQQSALEALSAAQEKYERAKQATNETLRNTTQAAQEKGEAAQAKDATFEKTQQGYEMTGDTVSNSARTASEKAAQAKNTTLGKTQQGYEATRDTVSNAARTAAEYATPAAEKARCVAVQAKDVTLETGKTAAEKAKCAAEIAAKVAVDLKEKATVAGWTASHYATQLTVDGTRAAANAVEGAVGYVAPKASELAAKSVETVKGLAASAGETAKEFTARKKEESWREYEAKRASQLQEGEEILPSTGGIGKVLPSGERTQAQGTNLQEKVQGKGSDILGAVTETVSDIGSSMIKPIDNANTKVKEHGGTTITPKGQDAGGVLDAIGETIAEIAHTTKVIVVGEDDEVEKSMQKNIGSDSHSLDRAKHEGYRAPKNNVS</sequence>
<dbReference type="EMBL" id="X75880">
    <property type="protein sequence ID" value="CAA53474.1"/>
    <property type="molecule type" value="mRNA"/>
</dbReference>
<dbReference type="EMBL" id="U49977">
    <property type="protein sequence ID" value="AAC49857.1"/>
    <property type="molecule type" value="Genomic_DNA"/>
</dbReference>
<dbReference type="PIR" id="S52657">
    <property type="entry name" value="S52657"/>
</dbReference>
<dbReference type="SMR" id="Q41060"/>
<dbReference type="EnsemblPlants" id="Psat5g275760.1">
    <property type="protein sequence ID" value="Psat5g275760.1.cds"/>
    <property type="gene ID" value="Psat5g275760"/>
</dbReference>
<dbReference type="Gramene" id="Psat5g275760.1">
    <property type="protein sequence ID" value="Psat5g275760.1.cds"/>
    <property type="gene ID" value="Psat5g275760"/>
</dbReference>
<dbReference type="GO" id="GO:0005829">
    <property type="term" value="C:cytosol"/>
    <property type="evidence" value="ECO:0007669"/>
    <property type="project" value="TreeGrafter"/>
</dbReference>
<dbReference type="GO" id="GO:0009631">
    <property type="term" value="P:cold acclimation"/>
    <property type="evidence" value="ECO:0007669"/>
    <property type="project" value="TreeGrafter"/>
</dbReference>
<dbReference type="PANTHER" id="PTHR47877">
    <property type="entry name" value="LATE EMBRYOGENESIS ABUNDANT DOMAIN-CONTAINING PROTEIN / LEA DOMAIN-CONTAINING PROTEIN"/>
    <property type="match status" value="1"/>
</dbReference>
<dbReference type="PANTHER" id="PTHR47877:SF3">
    <property type="entry name" value="LATE EMBRYOGENESIS ABUNDANT DOMAIN-CONTAINING PROTEIN _ LEA DOMAIN-CONTAINING PROTEIN"/>
    <property type="match status" value="1"/>
</dbReference>
<protein>
    <recommendedName>
        <fullName>Seed biotin-containing protein SBP65</fullName>
    </recommendedName>
    <alternativeName>
        <fullName>Seed biotinylated protein of 65 kDa</fullName>
    </alternativeName>
</protein>
<accession>Q41060</accession>
<name>SBP65_PEA</name>
<evidence type="ECO:0000250" key="1"/>
<evidence type="ECO:0000255" key="2"/>
<evidence type="ECO:0000256" key="3">
    <source>
        <dbReference type="SAM" id="MobiDB-lite"/>
    </source>
</evidence>
<evidence type="ECO:0000269" key="4">
    <source>
    </source>
</evidence>
<evidence type="ECO:0000305" key="5"/>
<feature type="chain" id="PRO_0000342635" description="Seed biotin-containing protein SBP65">
    <location>
        <begin position="1"/>
        <end position="551"/>
    </location>
</feature>
<feature type="region of interest" description="Disordered" evidence="3">
    <location>
        <begin position="1"/>
        <end position="29"/>
    </location>
</feature>
<feature type="region of interest" description="Disordered" evidence="3">
    <location>
        <begin position="197"/>
        <end position="265"/>
    </location>
</feature>
<feature type="region of interest" description="Disordered" evidence="3">
    <location>
        <begin position="518"/>
        <end position="551"/>
    </location>
</feature>
<feature type="coiled-coil region" evidence="2">
    <location>
        <begin position="141"/>
        <end position="211"/>
    </location>
</feature>
<feature type="compositionally biased region" description="Basic and acidic residues" evidence="3">
    <location>
        <begin position="1"/>
        <end position="20"/>
    </location>
</feature>
<feature type="compositionally biased region" description="Low complexity" evidence="3">
    <location>
        <begin position="206"/>
        <end position="219"/>
    </location>
</feature>
<feature type="compositionally biased region" description="Polar residues" evidence="3">
    <location>
        <begin position="223"/>
        <end position="242"/>
    </location>
</feature>
<feature type="compositionally biased region" description="Polar residues" evidence="3">
    <location>
        <begin position="250"/>
        <end position="265"/>
    </location>
</feature>
<feature type="compositionally biased region" description="Basic and acidic residues" evidence="3">
    <location>
        <begin position="533"/>
        <end position="544"/>
    </location>
</feature>
<feature type="modified residue" description="N6-biotinyllysine; atypical" evidence="4">
    <location>
        <position position="103"/>
    </location>
</feature>